<proteinExistence type="evidence at protein level"/>
<evidence type="ECO:0000255" key="1"/>
<evidence type="ECO:0000269" key="2">
    <source>
    </source>
</evidence>
<organism>
    <name type="scientific">Saccharomyces cerevisiae (strain ATCC 204508 / S288c)</name>
    <name type="common">Baker's yeast</name>
    <dbReference type="NCBI Taxonomy" id="559292"/>
    <lineage>
        <taxon>Eukaryota</taxon>
        <taxon>Fungi</taxon>
        <taxon>Dikarya</taxon>
        <taxon>Ascomycota</taxon>
        <taxon>Saccharomycotina</taxon>
        <taxon>Saccharomycetes</taxon>
        <taxon>Saccharomycetales</taxon>
        <taxon>Saccharomycetaceae</taxon>
        <taxon>Saccharomyces</taxon>
    </lineage>
</organism>
<dbReference type="EMBL" id="Z72811">
    <property type="protein sequence ID" value="CAA97009.1"/>
    <property type="molecule type" value="Genomic_DNA"/>
</dbReference>
<dbReference type="EMBL" id="BK006941">
    <property type="protein sequence ID" value="DAA08120.1"/>
    <property type="molecule type" value="Genomic_DNA"/>
</dbReference>
<dbReference type="PIR" id="S64317">
    <property type="entry name" value="S64317"/>
</dbReference>
<dbReference type="RefSeq" id="NP_011540.3">
    <property type="nucleotide sequence ID" value="NM_001181155.3"/>
</dbReference>
<dbReference type="SMR" id="P53217"/>
<dbReference type="BioGRID" id="33267">
    <property type="interactions" value="37"/>
</dbReference>
<dbReference type="DIP" id="DIP-5510N"/>
<dbReference type="FunCoup" id="P53217">
    <property type="interactions" value="79"/>
</dbReference>
<dbReference type="IntAct" id="P53217">
    <property type="interactions" value="38"/>
</dbReference>
<dbReference type="MINT" id="P53217"/>
<dbReference type="STRING" id="4932.YGR026W"/>
<dbReference type="PaxDb" id="4932-YGR026W"/>
<dbReference type="PeptideAtlas" id="P53217"/>
<dbReference type="EnsemblFungi" id="YGR026W_mRNA">
    <property type="protein sequence ID" value="YGR026W"/>
    <property type="gene ID" value="YGR026W"/>
</dbReference>
<dbReference type="GeneID" id="852910"/>
<dbReference type="KEGG" id="sce:YGR026W"/>
<dbReference type="AGR" id="SGD:S000003258"/>
<dbReference type="SGD" id="S000003258">
    <property type="gene designation" value="YGR026W"/>
</dbReference>
<dbReference type="VEuPathDB" id="FungiDB:YGR026W"/>
<dbReference type="eggNOG" id="ENOG502QRJ1">
    <property type="taxonomic scope" value="Eukaryota"/>
</dbReference>
<dbReference type="HOGENOM" id="CLU_074989_0_0_1"/>
<dbReference type="InParanoid" id="P53217"/>
<dbReference type="OMA" id="WLRLNFS"/>
<dbReference type="OrthoDB" id="5581259at2759"/>
<dbReference type="BioCyc" id="YEAST:G3O-30750-MONOMER"/>
<dbReference type="BioGRID-ORCS" id="852910">
    <property type="hits" value="2 hits in 10 CRISPR screens"/>
</dbReference>
<dbReference type="ChiTaRS" id="YGR026W">
    <property type="organism name" value="yeast"/>
</dbReference>
<dbReference type="PRO" id="PR:P53217"/>
<dbReference type="Proteomes" id="UP000002311">
    <property type="component" value="Chromosome VII"/>
</dbReference>
<dbReference type="RNAct" id="P53217">
    <property type="molecule type" value="protein"/>
</dbReference>
<dbReference type="GO" id="GO:0071944">
    <property type="term" value="C:cell periphery"/>
    <property type="evidence" value="ECO:0007005"/>
    <property type="project" value="SGD"/>
</dbReference>
<dbReference type="GO" id="GO:0005783">
    <property type="term" value="C:endoplasmic reticulum"/>
    <property type="evidence" value="ECO:0007005"/>
    <property type="project" value="SGD"/>
</dbReference>
<dbReference type="GO" id="GO:0005886">
    <property type="term" value="C:plasma membrane"/>
    <property type="evidence" value="ECO:0007669"/>
    <property type="project" value="UniProtKB-SubCell"/>
</dbReference>
<dbReference type="GO" id="GO:0071786">
    <property type="term" value="P:endoplasmic reticulum tubular network organization"/>
    <property type="evidence" value="ECO:0000318"/>
    <property type="project" value="GO_Central"/>
</dbReference>
<dbReference type="GO" id="GO:0061024">
    <property type="term" value="P:membrane organization"/>
    <property type="evidence" value="ECO:0000318"/>
    <property type="project" value="GO_Central"/>
</dbReference>
<dbReference type="InterPro" id="IPR051645">
    <property type="entry name" value="PER33/POM33_regulator"/>
</dbReference>
<dbReference type="PANTHER" id="PTHR12703:SF3">
    <property type="entry name" value="ABR032WP"/>
    <property type="match status" value="1"/>
</dbReference>
<dbReference type="PANTHER" id="PTHR12703">
    <property type="entry name" value="TRANSMEMBRANE PROTEIN 33"/>
    <property type="match status" value="1"/>
</dbReference>
<gene>
    <name type="ordered locus">YGR026W</name>
</gene>
<protein>
    <recommendedName>
        <fullName>Uncharacterized membrane protein YGR026W</fullName>
    </recommendedName>
</protein>
<comment type="subcellular location">
    <subcellularLocation>
        <location evidence="2">Cell membrane</location>
        <topology evidence="2">Multi-pass membrane protein</topology>
    </subcellularLocation>
</comment>
<accession>P53217</accession>
<accession>D6VUF9</accession>
<sequence length="278" mass="33255">MAKTIKVIRKKDPKKKNLSDPLAKQKLVWKIGHVLTLVFGLLFSITYFYHVLIFFKYRSWKWLFLRVNKNYSFIQSKRWYMKLLSWSPQVMYRLSLIGVFMSESVTMQQNWVGLNPTWNDLLSSENFHTLLIACLWFFGGGKSFYKILPYMILSYLHLTKMNYELNANKEEKIPLTPKDRKMLHLLAYSELLVILALTLDTILFKTGTSGFMLVIYVGIYWLRLNFSPYAQVAVLELLVKFEKYVPKKYRDKWQVIKNFIYMKMKEHEKRTEEVARYA</sequence>
<keyword id="KW-1003">Cell membrane</keyword>
<keyword id="KW-0472">Membrane</keyword>
<keyword id="KW-1185">Reference proteome</keyword>
<keyword id="KW-0812">Transmembrane</keyword>
<keyword id="KW-1133">Transmembrane helix</keyword>
<feature type="chain" id="PRO_0000202790" description="Uncharacterized membrane protein YGR026W">
    <location>
        <begin position="1"/>
        <end position="278"/>
    </location>
</feature>
<feature type="topological domain" description="Cytoplasmic" evidence="1">
    <location>
        <begin position="1"/>
        <end position="34"/>
    </location>
</feature>
<feature type="transmembrane region" description="Helical" evidence="1">
    <location>
        <begin position="35"/>
        <end position="55"/>
    </location>
</feature>
<feature type="topological domain" description="Extracellular" evidence="1">
    <location>
        <begin position="56"/>
        <end position="129"/>
    </location>
</feature>
<feature type="transmembrane region" description="Helical" evidence="1">
    <location>
        <begin position="130"/>
        <end position="150"/>
    </location>
</feature>
<feature type="topological domain" description="Cytoplasmic" evidence="1">
    <location>
        <begin position="151"/>
        <end position="180"/>
    </location>
</feature>
<feature type="transmembrane region" description="Helical" evidence="1">
    <location>
        <begin position="181"/>
        <end position="201"/>
    </location>
</feature>
<feature type="topological domain" description="Extracellular" evidence="1">
    <location>
        <begin position="202"/>
        <end position="205"/>
    </location>
</feature>
<feature type="transmembrane region" description="Helical" evidence="1">
    <location>
        <begin position="206"/>
        <end position="222"/>
    </location>
</feature>
<feature type="topological domain" description="Cytoplasmic" evidence="1">
    <location>
        <begin position="223"/>
        <end position="278"/>
    </location>
</feature>
<reference key="1">
    <citation type="journal article" date="1997" name="Yeast">
        <title>Sequence analysis of 203 kilobases from Saccharomyces cerevisiae chromosome VII.</title>
        <authorList>
            <person name="Rieger M."/>
            <person name="Brueckner M."/>
            <person name="Schaefer M."/>
            <person name="Mueller-Auer S."/>
        </authorList>
    </citation>
    <scope>NUCLEOTIDE SEQUENCE [GENOMIC DNA]</scope>
    <source>
        <strain>ATCC 204508 / S288c</strain>
    </source>
</reference>
<reference key="2">
    <citation type="journal article" date="1997" name="Nature">
        <title>The nucleotide sequence of Saccharomyces cerevisiae chromosome VII.</title>
        <authorList>
            <person name="Tettelin H."/>
            <person name="Agostoni-Carbone M.L."/>
            <person name="Albermann K."/>
            <person name="Albers M."/>
            <person name="Arroyo J."/>
            <person name="Backes U."/>
            <person name="Barreiros T."/>
            <person name="Bertani I."/>
            <person name="Bjourson A.J."/>
            <person name="Brueckner M."/>
            <person name="Bruschi C.V."/>
            <person name="Carignani G."/>
            <person name="Castagnoli L."/>
            <person name="Cerdan E."/>
            <person name="Clemente M.L."/>
            <person name="Coblenz A."/>
            <person name="Coglievina M."/>
            <person name="Coissac E."/>
            <person name="Defoor E."/>
            <person name="Del Bino S."/>
            <person name="Delius H."/>
            <person name="Delneri D."/>
            <person name="de Wergifosse P."/>
            <person name="Dujon B."/>
            <person name="Durand P."/>
            <person name="Entian K.-D."/>
            <person name="Eraso P."/>
            <person name="Escribano V."/>
            <person name="Fabiani L."/>
            <person name="Fartmann B."/>
            <person name="Feroli F."/>
            <person name="Feuermann M."/>
            <person name="Frontali L."/>
            <person name="Garcia-Gonzalez M."/>
            <person name="Garcia-Saez M.I."/>
            <person name="Goffeau A."/>
            <person name="Guerreiro P."/>
            <person name="Hani J."/>
            <person name="Hansen M."/>
            <person name="Hebling U."/>
            <person name="Hernandez K."/>
            <person name="Heumann K."/>
            <person name="Hilger F."/>
            <person name="Hofmann B."/>
            <person name="Indge K.J."/>
            <person name="James C.M."/>
            <person name="Klima R."/>
            <person name="Koetter P."/>
            <person name="Kramer B."/>
            <person name="Kramer W."/>
            <person name="Lauquin G."/>
            <person name="Leuther H."/>
            <person name="Louis E.J."/>
            <person name="Maillier E."/>
            <person name="Marconi A."/>
            <person name="Martegani E."/>
            <person name="Mazon M.J."/>
            <person name="Mazzoni C."/>
            <person name="McReynolds A.D.K."/>
            <person name="Melchioretto P."/>
            <person name="Mewes H.-W."/>
            <person name="Minenkova O."/>
            <person name="Mueller-Auer S."/>
            <person name="Nawrocki A."/>
            <person name="Netter P."/>
            <person name="Neu R."/>
            <person name="Nombela C."/>
            <person name="Oliver S.G."/>
            <person name="Panzeri L."/>
            <person name="Paoluzi S."/>
            <person name="Plevani P."/>
            <person name="Portetelle D."/>
            <person name="Portillo F."/>
            <person name="Potier S."/>
            <person name="Purnelle B."/>
            <person name="Rieger M."/>
            <person name="Riles L."/>
            <person name="Rinaldi T."/>
            <person name="Robben J."/>
            <person name="Rodrigues-Pousada C."/>
            <person name="Rodriguez-Belmonte E."/>
            <person name="Rodriguez-Torres A.M."/>
            <person name="Rose M."/>
            <person name="Ruzzi M."/>
            <person name="Saliola M."/>
            <person name="Sanchez-Perez M."/>
            <person name="Schaefer B."/>
            <person name="Schaefer M."/>
            <person name="Scharfe M."/>
            <person name="Schmidheini T."/>
            <person name="Schreer A."/>
            <person name="Skala J."/>
            <person name="Souciet J.-L."/>
            <person name="Steensma H.Y."/>
            <person name="Talla E."/>
            <person name="Thierry A."/>
            <person name="Vandenbol M."/>
            <person name="van der Aart Q.J.M."/>
            <person name="Van Dyck L."/>
            <person name="Vanoni M."/>
            <person name="Verhasselt P."/>
            <person name="Voet M."/>
            <person name="Volckaert G."/>
            <person name="Wambutt R."/>
            <person name="Watson M.D."/>
            <person name="Weber N."/>
            <person name="Wedler E."/>
            <person name="Wedler H."/>
            <person name="Wipfli P."/>
            <person name="Wolf K."/>
            <person name="Wright L.F."/>
            <person name="Zaccaria P."/>
            <person name="Zimmermann M."/>
            <person name="Zollner A."/>
            <person name="Kleine K."/>
        </authorList>
    </citation>
    <scope>NUCLEOTIDE SEQUENCE [LARGE SCALE GENOMIC DNA]</scope>
    <source>
        <strain>ATCC 204508 / S288c</strain>
    </source>
</reference>
<reference key="3">
    <citation type="journal article" date="2014" name="G3 (Bethesda)">
        <title>The reference genome sequence of Saccharomyces cerevisiae: Then and now.</title>
        <authorList>
            <person name="Engel S.R."/>
            <person name="Dietrich F.S."/>
            <person name="Fisk D.G."/>
            <person name="Binkley G."/>
            <person name="Balakrishnan R."/>
            <person name="Costanzo M.C."/>
            <person name="Dwight S.S."/>
            <person name="Hitz B.C."/>
            <person name="Karra K."/>
            <person name="Nash R.S."/>
            <person name="Weng S."/>
            <person name="Wong E.D."/>
            <person name="Lloyd P."/>
            <person name="Skrzypek M.S."/>
            <person name="Miyasato S.R."/>
            <person name="Simison M."/>
            <person name="Cherry J.M."/>
        </authorList>
    </citation>
    <scope>GENOME REANNOTATION</scope>
    <source>
        <strain>ATCC 204508 / S288c</strain>
    </source>
</reference>
<reference key="4">
    <citation type="journal article" date="2003" name="Nature">
        <title>Global analysis of protein localization in budding yeast.</title>
        <authorList>
            <person name="Huh W.-K."/>
            <person name="Falvo J.V."/>
            <person name="Gerke L.C."/>
            <person name="Carroll A.S."/>
            <person name="Howson R.W."/>
            <person name="Weissman J.S."/>
            <person name="O'Shea E.K."/>
        </authorList>
    </citation>
    <scope>SUBCELLULAR LOCATION [LARGE SCALE ANALYSIS]</scope>
</reference>
<reference key="5">
    <citation type="journal article" date="2006" name="Proc. Natl. Acad. Sci. U.S.A.">
        <title>A global topology map of the Saccharomyces cerevisiae membrane proteome.</title>
        <authorList>
            <person name="Kim H."/>
            <person name="Melen K."/>
            <person name="Oesterberg M."/>
            <person name="von Heijne G."/>
        </authorList>
    </citation>
    <scope>TOPOLOGY [LARGE SCALE ANALYSIS]</scope>
    <source>
        <strain>ATCC 208353 / W303-1A</strain>
    </source>
</reference>
<reference key="6">
    <citation type="journal article" date="2012" name="Proc. Natl. Acad. Sci. U.S.A.">
        <title>N-terminal acetylome analyses and functional insights of the N-terminal acetyltransferase NatB.</title>
        <authorList>
            <person name="Van Damme P."/>
            <person name="Lasa M."/>
            <person name="Polevoda B."/>
            <person name="Gazquez C."/>
            <person name="Elosegui-Artola A."/>
            <person name="Kim D.S."/>
            <person name="De Juan-Pardo E."/>
            <person name="Demeyer K."/>
            <person name="Hole K."/>
            <person name="Larrea E."/>
            <person name="Timmerman E."/>
            <person name="Prieto J."/>
            <person name="Arnesen T."/>
            <person name="Sherman F."/>
            <person name="Gevaert K."/>
            <person name="Aldabe R."/>
        </authorList>
    </citation>
    <scope>IDENTIFICATION BY MASS SPECTROMETRY [LARGE SCALE ANALYSIS]</scope>
</reference>
<name>YG1I_YEAST</name>